<dbReference type="EMBL" id="FM180568">
    <property type="protein sequence ID" value="CAS11117.1"/>
    <property type="molecule type" value="Genomic_DNA"/>
</dbReference>
<dbReference type="RefSeq" id="WP_000062611.1">
    <property type="nucleotide sequence ID" value="NC_011601.1"/>
</dbReference>
<dbReference type="SMR" id="B7UK30"/>
<dbReference type="GeneID" id="93778681"/>
<dbReference type="KEGG" id="ecg:E2348C_3569"/>
<dbReference type="HOGENOM" id="CLU_098428_0_0_6"/>
<dbReference type="Proteomes" id="UP000008205">
    <property type="component" value="Chromosome"/>
</dbReference>
<dbReference type="GO" id="GO:1990904">
    <property type="term" value="C:ribonucleoprotein complex"/>
    <property type="evidence" value="ECO:0007669"/>
    <property type="project" value="UniProtKB-KW"/>
</dbReference>
<dbReference type="GO" id="GO:0005840">
    <property type="term" value="C:ribosome"/>
    <property type="evidence" value="ECO:0007669"/>
    <property type="project" value="UniProtKB-KW"/>
</dbReference>
<dbReference type="GO" id="GO:0019843">
    <property type="term" value="F:rRNA binding"/>
    <property type="evidence" value="ECO:0007669"/>
    <property type="project" value="UniProtKB-UniRule"/>
</dbReference>
<dbReference type="GO" id="GO:0003735">
    <property type="term" value="F:structural constituent of ribosome"/>
    <property type="evidence" value="ECO:0007669"/>
    <property type="project" value="InterPro"/>
</dbReference>
<dbReference type="GO" id="GO:0006412">
    <property type="term" value="P:translation"/>
    <property type="evidence" value="ECO:0007669"/>
    <property type="project" value="UniProtKB-UniRule"/>
</dbReference>
<dbReference type="FunFam" id="3.30.1370.30:FF:000003">
    <property type="entry name" value="30S ribosomal protein S8"/>
    <property type="match status" value="1"/>
</dbReference>
<dbReference type="FunFam" id="3.30.1490.10:FF:000001">
    <property type="entry name" value="30S ribosomal protein S8"/>
    <property type="match status" value="1"/>
</dbReference>
<dbReference type="Gene3D" id="3.30.1370.30">
    <property type="match status" value="1"/>
</dbReference>
<dbReference type="Gene3D" id="3.30.1490.10">
    <property type="match status" value="1"/>
</dbReference>
<dbReference type="HAMAP" id="MF_01302_B">
    <property type="entry name" value="Ribosomal_uS8_B"/>
    <property type="match status" value="1"/>
</dbReference>
<dbReference type="InterPro" id="IPR000630">
    <property type="entry name" value="Ribosomal_uS8"/>
</dbReference>
<dbReference type="InterPro" id="IPR047863">
    <property type="entry name" value="Ribosomal_uS8_CS"/>
</dbReference>
<dbReference type="InterPro" id="IPR035987">
    <property type="entry name" value="Ribosomal_uS8_sf"/>
</dbReference>
<dbReference type="NCBIfam" id="NF001109">
    <property type="entry name" value="PRK00136.1"/>
    <property type="match status" value="1"/>
</dbReference>
<dbReference type="PANTHER" id="PTHR11758">
    <property type="entry name" value="40S RIBOSOMAL PROTEIN S15A"/>
    <property type="match status" value="1"/>
</dbReference>
<dbReference type="Pfam" id="PF00410">
    <property type="entry name" value="Ribosomal_S8"/>
    <property type="match status" value="1"/>
</dbReference>
<dbReference type="SUPFAM" id="SSF56047">
    <property type="entry name" value="Ribosomal protein S8"/>
    <property type="match status" value="1"/>
</dbReference>
<dbReference type="PROSITE" id="PS00053">
    <property type="entry name" value="RIBOSOMAL_S8"/>
    <property type="match status" value="1"/>
</dbReference>
<sequence length="130" mass="14127">MSMQDPIADMLTRIRNGQAANKAAVTMPSSKLKVAIANVLKEEGFIEDFKVEGDTKPELELTLKYFQGKAVVESIQRVSRPGLRIYKRKDELPKVMAGLGIAVVSTSKGVMTDRAARQAGLGGEIICYVA</sequence>
<gene>
    <name evidence="1" type="primary">rpsH</name>
    <name type="ordered locus">E2348C_3569</name>
</gene>
<protein>
    <recommendedName>
        <fullName evidence="1">Small ribosomal subunit protein uS8</fullName>
    </recommendedName>
    <alternativeName>
        <fullName evidence="2">30S ribosomal protein S8</fullName>
    </alternativeName>
</protein>
<reference key="1">
    <citation type="journal article" date="2009" name="J. Bacteriol.">
        <title>Complete genome sequence and comparative genome analysis of enteropathogenic Escherichia coli O127:H6 strain E2348/69.</title>
        <authorList>
            <person name="Iguchi A."/>
            <person name="Thomson N.R."/>
            <person name="Ogura Y."/>
            <person name="Saunders D."/>
            <person name="Ooka T."/>
            <person name="Henderson I.R."/>
            <person name="Harris D."/>
            <person name="Asadulghani M."/>
            <person name="Kurokawa K."/>
            <person name="Dean P."/>
            <person name="Kenny B."/>
            <person name="Quail M.A."/>
            <person name="Thurston S."/>
            <person name="Dougan G."/>
            <person name="Hayashi T."/>
            <person name="Parkhill J."/>
            <person name="Frankel G."/>
        </authorList>
    </citation>
    <scope>NUCLEOTIDE SEQUENCE [LARGE SCALE GENOMIC DNA]</scope>
    <source>
        <strain>E2348/69 / EPEC</strain>
    </source>
</reference>
<organism>
    <name type="scientific">Escherichia coli O127:H6 (strain E2348/69 / EPEC)</name>
    <dbReference type="NCBI Taxonomy" id="574521"/>
    <lineage>
        <taxon>Bacteria</taxon>
        <taxon>Pseudomonadati</taxon>
        <taxon>Pseudomonadota</taxon>
        <taxon>Gammaproteobacteria</taxon>
        <taxon>Enterobacterales</taxon>
        <taxon>Enterobacteriaceae</taxon>
        <taxon>Escherichia</taxon>
    </lineage>
</organism>
<keyword id="KW-1185">Reference proteome</keyword>
<keyword id="KW-0687">Ribonucleoprotein</keyword>
<keyword id="KW-0689">Ribosomal protein</keyword>
<keyword id="KW-0694">RNA-binding</keyword>
<keyword id="KW-0699">rRNA-binding</keyword>
<comment type="function">
    <text evidence="1">One of the primary rRNA binding proteins, it binds directly to 16S rRNA central domain where it helps coordinate assembly of the platform of the 30S subunit.</text>
</comment>
<comment type="subunit">
    <text evidence="1">Part of the 30S ribosomal subunit. Contacts proteins S5 and S12.</text>
</comment>
<comment type="similarity">
    <text evidence="1">Belongs to the universal ribosomal protein uS8 family.</text>
</comment>
<evidence type="ECO:0000255" key="1">
    <source>
        <dbReference type="HAMAP-Rule" id="MF_01302"/>
    </source>
</evidence>
<evidence type="ECO:0000305" key="2"/>
<feature type="chain" id="PRO_1000165330" description="Small ribosomal subunit protein uS8">
    <location>
        <begin position="1"/>
        <end position="130"/>
    </location>
</feature>
<accession>B7UK30</accession>
<proteinExistence type="inferred from homology"/>
<name>RS8_ECO27</name>